<feature type="chain" id="PRO_0000158618" description="Ribosomal RNA small subunit methyltransferase Nep1">
    <location>
        <begin position="1"/>
        <end position="221"/>
    </location>
</feature>
<feature type="binding site" evidence="1">
    <location>
        <position position="174"/>
    </location>
    <ligand>
        <name>S-adenosyl-L-methionine</name>
        <dbReference type="ChEBI" id="CHEBI:59789"/>
    </ligand>
</feature>
<feature type="binding site" evidence="1">
    <location>
        <position position="179"/>
    </location>
    <ligand>
        <name>S-adenosyl-L-methionine</name>
        <dbReference type="ChEBI" id="CHEBI:59789"/>
    </ligand>
</feature>
<feature type="binding site" evidence="1">
    <location>
        <begin position="196"/>
        <end position="201"/>
    </location>
    <ligand>
        <name>S-adenosyl-L-methionine</name>
        <dbReference type="ChEBI" id="CHEBI:59789"/>
    </ligand>
</feature>
<feature type="site" description="Interaction with substrate rRNA" evidence="1">
    <location>
        <position position="59"/>
    </location>
</feature>
<feature type="site" description="Stabilizes Arg-59" evidence="1">
    <location>
        <position position="61"/>
    </location>
</feature>
<feature type="site" description="Interaction with substrate rRNA" evidence="1">
    <location>
        <position position="100"/>
    </location>
</feature>
<feature type="site" description="Interaction with substrate rRNA" evidence="1">
    <location>
        <position position="103"/>
    </location>
</feature>
<feature type="site" description="Interaction with substrate rRNA" evidence="1">
    <location>
        <position position="107"/>
    </location>
</feature>
<name>NEP1_PYRAE</name>
<keyword id="KW-0489">Methyltransferase</keyword>
<keyword id="KW-1185">Reference proteome</keyword>
<keyword id="KW-0690">Ribosome biogenesis</keyword>
<keyword id="KW-0694">RNA-binding</keyword>
<keyword id="KW-0698">rRNA processing</keyword>
<keyword id="KW-0699">rRNA-binding</keyword>
<keyword id="KW-0949">S-adenosyl-L-methionine</keyword>
<keyword id="KW-0808">Transferase</keyword>
<evidence type="ECO:0000255" key="1">
    <source>
        <dbReference type="HAMAP-Rule" id="MF_00554"/>
    </source>
</evidence>
<evidence type="ECO:0000305" key="2"/>
<organism>
    <name type="scientific">Pyrobaculum aerophilum (strain ATCC 51768 / DSM 7523 / JCM 9630 / CIP 104966 / NBRC 100827 / IM2)</name>
    <dbReference type="NCBI Taxonomy" id="178306"/>
    <lineage>
        <taxon>Archaea</taxon>
        <taxon>Thermoproteota</taxon>
        <taxon>Thermoprotei</taxon>
        <taxon>Thermoproteales</taxon>
        <taxon>Thermoproteaceae</taxon>
        <taxon>Pyrobaculum</taxon>
    </lineage>
</organism>
<proteinExistence type="inferred from homology"/>
<sequence length="221" mass="24339">MILVLAESALELVPKEIWNHPAVLADARRRGKRPGEILLDRARHHPAMRLLADAKRRGRPDIVHQVLLAFQYSLLAKRGLGKAYIHTRDDYVIAVSPEARVPKNYNNFVALIEQLFALGKVPPKGEPLMELYRKDLATLLQELGGVWAVFHESGARKPLSQMGSELLKSVVVVGGFPHGDFQNKWVVEKAAVVYSLGEESLDAAQVICKAVTAAEVAAGLL</sequence>
<protein>
    <recommendedName>
        <fullName evidence="1">Ribosomal RNA small subunit methyltransferase Nep1</fullName>
        <ecNumber evidence="1">2.1.1.-</ecNumber>
    </recommendedName>
    <alternativeName>
        <fullName evidence="1">16S rRNA (pseudouridine-N1-)-methyltransferase Nep1</fullName>
    </alternativeName>
</protein>
<accession>Q8ZW45</accession>
<gene>
    <name type="primary">nep1</name>
    <name type="ordered locus">PAE1979</name>
</gene>
<comment type="function">
    <text evidence="1">Methyltransferase involved in ribosomal biogenesis. Specifically catalyzes the N1-methylation of the pseudouridine corresponding to position 914 in M.jannaschii 16S rRNA.</text>
</comment>
<comment type="catalytic activity">
    <reaction evidence="1">
        <text>a pseudouridine in rRNA + S-adenosyl-L-methionine = an N(1)-methylpseudouridine in rRNA + S-adenosyl-L-homocysteine + H(+)</text>
        <dbReference type="Rhea" id="RHEA:46696"/>
        <dbReference type="Rhea" id="RHEA-COMP:11634"/>
        <dbReference type="Rhea" id="RHEA-COMP:13933"/>
        <dbReference type="ChEBI" id="CHEBI:15378"/>
        <dbReference type="ChEBI" id="CHEBI:57856"/>
        <dbReference type="ChEBI" id="CHEBI:59789"/>
        <dbReference type="ChEBI" id="CHEBI:65314"/>
        <dbReference type="ChEBI" id="CHEBI:74890"/>
    </reaction>
</comment>
<comment type="subunit">
    <text evidence="1">Homodimer.</text>
</comment>
<comment type="similarity">
    <text evidence="2">Belongs to the class IV-like SAM-binding methyltransferase superfamily. RNA methyltransferase NEP1 family.</text>
</comment>
<reference key="1">
    <citation type="journal article" date="2002" name="Proc. Natl. Acad. Sci. U.S.A.">
        <title>Genome sequence of the hyperthermophilic crenarchaeon Pyrobaculum aerophilum.</title>
        <authorList>
            <person name="Fitz-Gibbon S.T."/>
            <person name="Ladner H."/>
            <person name="Kim U.-J."/>
            <person name="Stetter K.O."/>
            <person name="Simon M.I."/>
            <person name="Miller J.H."/>
        </authorList>
    </citation>
    <scope>NUCLEOTIDE SEQUENCE [LARGE SCALE GENOMIC DNA]</scope>
    <source>
        <strain>ATCC 51768 / DSM 7523 / JCM 9630 / CIP 104966 / NBRC 100827 / IM2</strain>
    </source>
</reference>
<dbReference type="EC" id="2.1.1.-" evidence="1"/>
<dbReference type="EMBL" id="AE009441">
    <property type="protein sequence ID" value="AAL63857.1"/>
    <property type="molecule type" value="Genomic_DNA"/>
</dbReference>
<dbReference type="RefSeq" id="WP_011008328.1">
    <property type="nucleotide sequence ID" value="NC_003364.1"/>
</dbReference>
<dbReference type="SMR" id="Q8ZW45"/>
<dbReference type="FunCoup" id="Q8ZW45">
    <property type="interactions" value="144"/>
</dbReference>
<dbReference type="STRING" id="178306.PAE1979"/>
<dbReference type="EnsemblBacteria" id="AAL63857">
    <property type="protein sequence ID" value="AAL63857"/>
    <property type="gene ID" value="PAE1979"/>
</dbReference>
<dbReference type="GeneID" id="1464180"/>
<dbReference type="KEGG" id="pai:PAE1979"/>
<dbReference type="PATRIC" id="fig|178306.9.peg.1461"/>
<dbReference type="eggNOG" id="arCOG04122">
    <property type="taxonomic scope" value="Archaea"/>
</dbReference>
<dbReference type="HOGENOM" id="CLU_055846_1_3_2"/>
<dbReference type="InParanoid" id="Q8ZW45"/>
<dbReference type="Proteomes" id="UP000002439">
    <property type="component" value="Chromosome"/>
</dbReference>
<dbReference type="GO" id="GO:0070037">
    <property type="term" value="F:rRNA (pseudouridine) methyltransferase activity"/>
    <property type="evidence" value="ECO:0000318"/>
    <property type="project" value="GO_Central"/>
</dbReference>
<dbReference type="GO" id="GO:0019843">
    <property type="term" value="F:rRNA binding"/>
    <property type="evidence" value="ECO:0000318"/>
    <property type="project" value="GO_Central"/>
</dbReference>
<dbReference type="GO" id="GO:0070475">
    <property type="term" value="P:rRNA base methylation"/>
    <property type="evidence" value="ECO:0000318"/>
    <property type="project" value="GO_Central"/>
</dbReference>
<dbReference type="CDD" id="cd18088">
    <property type="entry name" value="Nep1-like"/>
    <property type="match status" value="1"/>
</dbReference>
<dbReference type="FunFam" id="3.40.1280.10:FF:000042">
    <property type="entry name" value="Ribosomal RNA small subunit methyltransferase Nep1"/>
    <property type="match status" value="1"/>
</dbReference>
<dbReference type="Gene3D" id="3.40.1280.10">
    <property type="match status" value="1"/>
</dbReference>
<dbReference type="HAMAP" id="MF_00554">
    <property type="entry name" value="NEP1"/>
    <property type="match status" value="1"/>
</dbReference>
<dbReference type="InterPro" id="IPR029028">
    <property type="entry name" value="Alpha/beta_knot_MTases"/>
</dbReference>
<dbReference type="InterPro" id="IPR005304">
    <property type="entry name" value="Rbsml_bgen_MeTrfase_EMG1/NEP1"/>
</dbReference>
<dbReference type="InterPro" id="IPR023503">
    <property type="entry name" value="Ribosome_NEP1_arc"/>
</dbReference>
<dbReference type="InterPro" id="IPR029026">
    <property type="entry name" value="tRNA_m1G_MTases_N"/>
</dbReference>
<dbReference type="PANTHER" id="PTHR12636">
    <property type="entry name" value="NEP1/MRA1"/>
    <property type="match status" value="1"/>
</dbReference>
<dbReference type="PANTHER" id="PTHR12636:SF5">
    <property type="entry name" value="RIBOSOMAL RNA SMALL SUBUNIT METHYLTRANSFERASE NEP1"/>
    <property type="match status" value="1"/>
</dbReference>
<dbReference type="Pfam" id="PF03587">
    <property type="entry name" value="EMG1"/>
    <property type="match status" value="1"/>
</dbReference>
<dbReference type="SUPFAM" id="SSF75217">
    <property type="entry name" value="alpha/beta knot"/>
    <property type="match status" value="1"/>
</dbReference>